<organism>
    <name type="scientific">Pseudomonas aeruginosa (strain LESB58)</name>
    <dbReference type="NCBI Taxonomy" id="557722"/>
    <lineage>
        <taxon>Bacteria</taxon>
        <taxon>Pseudomonadati</taxon>
        <taxon>Pseudomonadota</taxon>
        <taxon>Gammaproteobacteria</taxon>
        <taxon>Pseudomonadales</taxon>
        <taxon>Pseudomonadaceae</taxon>
        <taxon>Pseudomonas</taxon>
    </lineage>
</organism>
<proteinExistence type="inferred from homology"/>
<sequence length="142" mass="16029">MKTYTAKPETVQRDWFVVDAAGQTLGRLATEIARRLRGKHKPEYTPHVDTGDYIVVINAEQVRVTGAKTTDKMYYHHSGFPGGIKSINFEKLIAKAPERVIETAVKGMLPKNPLGRDMYRKLKVYKGASHPHTAQQPQELKI</sequence>
<feature type="chain" id="PRO_1000144166" description="Large ribosomal subunit protein uL13">
    <location>
        <begin position="1"/>
        <end position="142"/>
    </location>
</feature>
<protein>
    <recommendedName>
        <fullName evidence="1">Large ribosomal subunit protein uL13</fullName>
    </recommendedName>
    <alternativeName>
        <fullName evidence="2">50S ribosomal protein L13</fullName>
    </alternativeName>
</protein>
<evidence type="ECO:0000255" key="1">
    <source>
        <dbReference type="HAMAP-Rule" id="MF_01366"/>
    </source>
</evidence>
<evidence type="ECO:0000305" key="2"/>
<dbReference type="EMBL" id="FM209186">
    <property type="protein sequence ID" value="CAW29566.1"/>
    <property type="molecule type" value="Genomic_DNA"/>
</dbReference>
<dbReference type="RefSeq" id="WP_003094164.1">
    <property type="nucleotide sequence ID" value="NC_011770.1"/>
</dbReference>
<dbReference type="SMR" id="B7UZL1"/>
<dbReference type="KEGG" id="pag:PLES_48121"/>
<dbReference type="HOGENOM" id="CLU_082184_2_2_6"/>
<dbReference type="GO" id="GO:0022625">
    <property type="term" value="C:cytosolic large ribosomal subunit"/>
    <property type="evidence" value="ECO:0007669"/>
    <property type="project" value="TreeGrafter"/>
</dbReference>
<dbReference type="GO" id="GO:0003729">
    <property type="term" value="F:mRNA binding"/>
    <property type="evidence" value="ECO:0007669"/>
    <property type="project" value="TreeGrafter"/>
</dbReference>
<dbReference type="GO" id="GO:0003735">
    <property type="term" value="F:structural constituent of ribosome"/>
    <property type="evidence" value="ECO:0007669"/>
    <property type="project" value="InterPro"/>
</dbReference>
<dbReference type="GO" id="GO:0017148">
    <property type="term" value="P:negative regulation of translation"/>
    <property type="evidence" value="ECO:0007669"/>
    <property type="project" value="TreeGrafter"/>
</dbReference>
<dbReference type="GO" id="GO:0006412">
    <property type="term" value="P:translation"/>
    <property type="evidence" value="ECO:0007669"/>
    <property type="project" value="UniProtKB-UniRule"/>
</dbReference>
<dbReference type="CDD" id="cd00392">
    <property type="entry name" value="Ribosomal_L13"/>
    <property type="match status" value="1"/>
</dbReference>
<dbReference type="FunFam" id="3.90.1180.10:FF:000001">
    <property type="entry name" value="50S ribosomal protein L13"/>
    <property type="match status" value="1"/>
</dbReference>
<dbReference type="Gene3D" id="3.90.1180.10">
    <property type="entry name" value="Ribosomal protein L13"/>
    <property type="match status" value="1"/>
</dbReference>
<dbReference type="HAMAP" id="MF_01366">
    <property type="entry name" value="Ribosomal_uL13"/>
    <property type="match status" value="1"/>
</dbReference>
<dbReference type="InterPro" id="IPR005822">
    <property type="entry name" value="Ribosomal_uL13"/>
</dbReference>
<dbReference type="InterPro" id="IPR005823">
    <property type="entry name" value="Ribosomal_uL13_bac-type"/>
</dbReference>
<dbReference type="InterPro" id="IPR023563">
    <property type="entry name" value="Ribosomal_uL13_CS"/>
</dbReference>
<dbReference type="InterPro" id="IPR036899">
    <property type="entry name" value="Ribosomal_uL13_sf"/>
</dbReference>
<dbReference type="NCBIfam" id="TIGR01066">
    <property type="entry name" value="rplM_bact"/>
    <property type="match status" value="1"/>
</dbReference>
<dbReference type="PANTHER" id="PTHR11545:SF2">
    <property type="entry name" value="LARGE RIBOSOMAL SUBUNIT PROTEIN UL13M"/>
    <property type="match status" value="1"/>
</dbReference>
<dbReference type="PANTHER" id="PTHR11545">
    <property type="entry name" value="RIBOSOMAL PROTEIN L13"/>
    <property type="match status" value="1"/>
</dbReference>
<dbReference type="Pfam" id="PF00572">
    <property type="entry name" value="Ribosomal_L13"/>
    <property type="match status" value="1"/>
</dbReference>
<dbReference type="PIRSF" id="PIRSF002181">
    <property type="entry name" value="Ribosomal_L13"/>
    <property type="match status" value="1"/>
</dbReference>
<dbReference type="SUPFAM" id="SSF52161">
    <property type="entry name" value="Ribosomal protein L13"/>
    <property type="match status" value="1"/>
</dbReference>
<dbReference type="PROSITE" id="PS00783">
    <property type="entry name" value="RIBOSOMAL_L13"/>
    <property type="match status" value="1"/>
</dbReference>
<name>RL13_PSEA8</name>
<accession>B7UZL1</accession>
<reference key="1">
    <citation type="journal article" date="2009" name="Genome Res.">
        <title>Newly introduced genomic prophage islands are critical determinants of in vivo competitiveness in the Liverpool epidemic strain of Pseudomonas aeruginosa.</title>
        <authorList>
            <person name="Winstanley C."/>
            <person name="Langille M.G.I."/>
            <person name="Fothergill J.L."/>
            <person name="Kukavica-Ibrulj I."/>
            <person name="Paradis-Bleau C."/>
            <person name="Sanschagrin F."/>
            <person name="Thomson N.R."/>
            <person name="Winsor G.L."/>
            <person name="Quail M.A."/>
            <person name="Lennard N."/>
            <person name="Bignell A."/>
            <person name="Clarke L."/>
            <person name="Seeger K."/>
            <person name="Saunders D."/>
            <person name="Harris D."/>
            <person name="Parkhill J."/>
            <person name="Hancock R.E.W."/>
            <person name="Brinkman F.S.L."/>
            <person name="Levesque R.C."/>
        </authorList>
    </citation>
    <scope>NUCLEOTIDE SEQUENCE [LARGE SCALE GENOMIC DNA]</scope>
    <source>
        <strain>LESB58</strain>
    </source>
</reference>
<keyword id="KW-0687">Ribonucleoprotein</keyword>
<keyword id="KW-0689">Ribosomal protein</keyword>
<gene>
    <name evidence="1" type="primary">rplM</name>
    <name type="ordered locus">PLES_48121</name>
</gene>
<comment type="function">
    <text evidence="1">This protein is one of the early assembly proteins of the 50S ribosomal subunit, although it is not seen to bind rRNA by itself. It is important during the early stages of 50S assembly.</text>
</comment>
<comment type="subunit">
    <text evidence="1">Part of the 50S ribosomal subunit.</text>
</comment>
<comment type="similarity">
    <text evidence="1">Belongs to the universal ribosomal protein uL13 family.</text>
</comment>